<sequence length="571" mass="62924">MAVTITKRPPRLTLQVLDIAPETTAIRCLDWDRDRFDIEFALENGTTYNSFLIKGERIALVDTSHAKFGDRYLEQLWQLVNPSDLDYLIVSHTEPDHSGLVKDVLVKAPHVTVVASKVALQFLGDLIHQPFTQQQVKNGDRLDLGKGHVLEFVMAPNLHWPDTILTFDHGTQTLFTCDVFGAHFCNDDPFDSEPELLAPDFKFYYDCLMGPNARSVLSAFKRLESLPPVQLVATGHGPLLRHHLDQWLESYRNWSQEQAKAATTVAIFYAANYGYSNALAEAIERGTAKTGVVVEKMDLLTAEPQDIRELTEIAAGIIIGTPPTTAVAKTALSTIRAAAHAKQAIGVFESGVADAEPAYPLLNQFRDAGLVPSFPVIRVTAAPTDALFQEAEEAGTDMGQWLLRDRTVKQMKALDTDLDKALGRLSGGLYIITAQKGAINSAMLASWVAQASTEPLGVSIAVAKDRAIESFLHVGDTFVLNVLEAENYQPLMRHFLKRFPPGADRFAHVKTYPASNGSPILADALAYMECTVVSRLDAHDHWIVYSTVDSGRVSKPDGMTAVHHRKVGNHY</sequence>
<organism>
    <name type="scientific">Thermosynechococcus vestitus (strain NIES-2133 / IAM M-273 / BP-1)</name>
    <dbReference type="NCBI Taxonomy" id="197221"/>
    <lineage>
        <taxon>Bacteria</taxon>
        <taxon>Bacillati</taxon>
        <taxon>Cyanobacteriota</taxon>
        <taxon>Cyanophyceae</taxon>
        <taxon>Acaryochloridales</taxon>
        <taxon>Thermosynechococcaceae</taxon>
        <taxon>Thermosynechococcus</taxon>
    </lineage>
</organism>
<evidence type="ECO:0000250" key="1"/>
<evidence type="ECO:0000255" key="2">
    <source>
        <dbReference type="PROSITE-ProRule" id="PRU00088"/>
    </source>
</evidence>
<evidence type="ECO:0000305" key="3"/>
<gene>
    <name type="primary">dfa1</name>
    <name type="ordered locus">tlr1088</name>
</gene>
<proteinExistence type="inferred from homology"/>
<feature type="chain" id="PRO_0000216799" description="Putative diflavin flavoprotein A 1">
    <location>
        <begin position="1"/>
        <end position="571"/>
    </location>
</feature>
<feature type="domain" description="Flavodoxin-like" evidence="2">
    <location>
        <begin position="265"/>
        <end position="426"/>
    </location>
</feature>
<feature type="region of interest" description="Zinc metallo-hydrolase">
    <location>
        <begin position="43"/>
        <end position="236"/>
    </location>
</feature>
<feature type="region of interest" description="Flavodoxin-reductase-like">
    <location>
        <begin position="427"/>
        <end position="571"/>
    </location>
</feature>
<feature type="binding site" evidence="1">
    <location>
        <position position="92"/>
    </location>
    <ligand>
        <name>Fe cation</name>
        <dbReference type="ChEBI" id="CHEBI:24875"/>
        <label>1</label>
    </ligand>
</feature>
<feature type="binding site" evidence="1">
    <location>
        <position position="94"/>
    </location>
    <ligand>
        <name>Fe cation</name>
        <dbReference type="ChEBI" id="CHEBI:24875"/>
        <label>1</label>
    </ligand>
</feature>
<feature type="binding site" evidence="1">
    <location>
        <position position="96"/>
    </location>
    <ligand>
        <name>Fe cation</name>
        <dbReference type="ChEBI" id="CHEBI:24875"/>
        <label>2</label>
    </ligand>
</feature>
<feature type="binding site" evidence="1">
    <location>
        <position position="159"/>
    </location>
    <ligand>
        <name>Fe cation</name>
        <dbReference type="ChEBI" id="CHEBI:24875"/>
        <label>1</label>
    </ligand>
</feature>
<feature type="binding site" evidence="1">
    <location>
        <position position="178"/>
    </location>
    <ligand>
        <name>Fe cation</name>
        <dbReference type="ChEBI" id="CHEBI:24875"/>
        <label>1</label>
    </ligand>
</feature>
<feature type="binding site" evidence="1">
    <location>
        <position position="178"/>
    </location>
    <ligand>
        <name>Fe cation</name>
        <dbReference type="ChEBI" id="CHEBI:24875"/>
        <label>2</label>
    </ligand>
</feature>
<feature type="binding site" evidence="1">
    <location>
        <position position="236"/>
    </location>
    <ligand>
        <name>Fe cation</name>
        <dbReference type="ChEBI" id="CHEBI:24875"/>
        <label>2</label>
    </ligand>
</feature>
<dbReference type="EC" id="1.-.-.-"/>
<dbReference type="EMBL" id="BA000039">
    <property type="protein sequence ID" value="BAC08641.1"/>
    <property type="molecule type" value="Genomic_DNA"/>
</dbReference>
<dbReference type="RefSeq" id="NP_681879.1">
    <property type="nucleotide sequence ID" value="NC_004113.1"/>
</dbReference>
<dbReference type="RefSeq" id="WP_011056931.1">
    <property type="nucleotide sequence ID" value="NC_004113.1"/>
</dbReference>
<dbReference type="SMR" id="Q8DJY2"/>
<dbReference type="STRING" id="197221.gene:10747682"/>
<dbReference type="EnsemblBacteria" id="BAC08641">
    <property type="protein sequence ID" value="BAC08641"/>
    <property type="gene ID" value="BAC08641"/>
</dbReference>
<dbReference type="KEGG" id="tel:tlr1088"/>
<dbReference type="PATRIC" id="fig|197221.4.peg.1142"/>
<dbReference type="eggNOG" id="COG0426">
    <property type="taxonomic scope" value="Bacteria"/>
</dbReference>
<dbReference type="eggNOG" id="COG1853">
    <property type="taxonomic scope" value="Bacteria"/>
</dbReference>
<dbReference type="Proteomes" id="UP000000440">
    <property type="component" value="Chromosome"/>
</dbReference>
<dbReference type="GO" id="GO:0010181">
    <property type="term" value="F:FMN binding"/>
    <property type="evidence" value="ECO:0007669"/>
    <property type="project" value="InterPro"/>
</dbReference>
<dbReference type="GO" id="GO:0046872">
    <property type="term" value="F:metal ion binding"/>
    <property type="evidence" value="ECO:0007669"/>
    <property type="project" value="UniProtKB-KW"/>
</dbReference>
<dbReference type="GO" id="GO:0016646">
    <property type="term" value="F:oxidoreductase activity, acting on the CH-NH group of donors, NAD or NADP as acceptor"/>
    <property type="evidence" value="ECO:0007669"/>
    <property type="project" value="UniProtKB-ARBA"/>
</dbReference>
<dbReference type="CDD" id="cd07709">
    <property type="entry name" value="flavodiiron_proteins_MBL-fold"/>
    <property type="match status" value="1"/>
</dbReference>
<dbReference type="Gene3D" id="3.40.50.360">
    <property type="match status" value="1"/>
</dbReference>
<dbReference type="Gene3D" id="2.30.110.10">
    <property type="entry name" value="Electron Transport, Fmn-binding Protein, Chain A"/>
    <property type="match status" value="1"/>
</dbReference>
<dbReference type="Gene3D" id="3.60.15.10">
    <property type="entry name" value="Ribonuclease Z/Hydroxyacylglutathione hydrolase-like"/>
    <property type="match status" value="1"/>
</dbReference>
<dbReference type="InterPro" id="IPR002563">
    <property type="entry name" value="Flavin_Rdtase-like_dom"/>
</dbReference>
<dbReference type="InterPro" id="IPR008254">
    <property type="entry name" value="Flavodoxin/NO_synth"/>
</dbReference>
<dbReference type="InterPro" id="IPR029039">
    <property type="entry name" value="Flavoprotein-like_sf"/>
</dbReference>
<dbReference type="InterPro" id="IPR001279">
    <property type="entry name" value="Metallo-B-lactamas"/>
</dbReference>
<dbReference type="InterPro" id="IPR051285">
    <property type="entry name" value="NADH_oxidoreductase_modular"/>
</dbReference>
<dbReference type="InterPro" id="IPR045761">
    <property type="entry name" value="ODP_dom"/>
</dbReference>
<dbReference type="InterPro" id="IPR036866">
    <property type="entry name" value="RibonucZ/Hydroxyglut_hydro"/>
</dbReference>
<dbReference type="InterPro" id="IPR012349">
    <property type="entry name" value="Split_barrel_FMN-bd"/>
</dbReference>
<dbReference type="PANTHER" id="PTHR32145">
    <property type="entry name" value="DIFLAVIN FLAVOPROTEIN A 2-RELATED"/>
    <property type="match status" value="1"/>
</dbReference>
<dbReference type="PANTHER" id="PTHR32145:SF11">
    <property type="entry name" value="DIFLAVIN FLAVOPROTEIN A 2-RELATED"/>
    <property type="match status" value="1"/>
</dbReference>
<dbReference type="Pfam" id="PF01613">
    <property type="entry name" value="Flavin_Reduct"/>
    <property type="match status" value="1"/>
</dbReference>
<dbReference type="Pfam" id="PF19583">
    <property type="entry name" value="ODP"/>
    <property type="match status" value="1"/>
</dbReference>
<dbReference type="SMART" id="SM00903">
    <property type="entry name" value="Flavin_Reduct"/>
    <property type="match status" value="1"/>
</dbReference>
<dbReference type="SMART" id="SM00849">
    <property type="entry name" value="Lactamase_B"/>
    <property type="match status" value="1"/>
</dbReference>
<dbReference type="SUPFAM" id="SSF52218">
    <property type="entry name" value="Flavoproteins"/>
    <property type="match status" value="1"/>
</dbReference>
<dbReference type="SUPFAM" id="SSF50475">
    <property type="entry name" value="FMN-binding split barrel"/>
    <property type="match status" value="1"/>
</dbReference>
<dbReference type="SUPFAM" id="SSF56281">
    <property type="entry name" value="Metallo-hydrolase/oxidoreductase"/>
    <property type="match status" value="1"/>
</dbReference>
<dbReference type="PROSITE" id="PS50902">
    <property type="entry name" value="FLAVODOXIN_LIKE"/>
    <property type="match status" value="1"/>
</dbReference>
<comment type="function">
    <text evidence="1">Mediates electron transfer from NADH to oxygen, reducing it to water. This modular protein has 3 redox cofactors, in other organisms the same activity requires 2 or 3 proteins (By similarity).</text>
</comment>
<comment type="cofactor">
    <cofactor>
        <name>Fe cation</name>
        <dbReference type="ChEBI" id="CHEBI:24875"/>
    </cofactor>
    <text>Binds 2 iron ions per subunit.</text>
</comment>
<comment type="miscellaneous">
    <text evidence="1">By homology with NorV in E.coli, may be involved in nitric oxide detoxification.</text>
</comment>
<comment type="similarity">
    <text evidence="3">In the N-terminal section; belongs to the zinc metallo-hydrolase group 3 family.</text>
</comment>
<comment type="similarity">
    <text evidence="3">In the C-terminal section; belongs to the flavodoxin reductase family.</text>
</comment>
<reference key="1">
    <citation type="journal article" date="2002" name="DNA Res.">
        <title>Complete genome structure of the thermophilic cyanobacterium Thermosynechococcus elongatus BP-1.</title>
        <authorList>
            <person name="Nakamura Y."/>
            <person name="Kaneko T."/>
            <person name="Sato S."/>
            <person name="Ikeuchi M."/>
            <person name="Katoh H."/>
            <person name="Sasamoto S."/>
            <person name="Watanabe A."/>
            <person name="Iriguchi M."/>
            <person name="Kawashima K."/>
            <person name="Kimura T."/>
            <person name="Kishida Y."/>
            <person name="Kiyokawa C."/>
            <person name="Kohara M."/>
            <person name="Matsumoto M."/>
            <person name="Matsuno A."/>
            <person name="Nakazaki N."/>
            <person name="Shimpo S."/>
            <person name="Sugimoto M."/>
            <person name="Takeuchi C."/>
            <person name="Yamada M."/>
            <person name="Tabata S."/>
        </authorList>
    </citation>
    <scope>NUCLEOTIDE SEQUENCE [LARGE SCALE GENOMIC DNA]</scope>
    <source>
        <strain>NIES-2133 / IAM M-273 / BP-1</strain>
    </source>
</reference>
<keyword id="KW-0249">Electron transport</keyword>
<keyword id="KW-0408">Iron</keyword>
<keyword id="KW-0479">Metal-binding</keyword>
<keyword id="KW-0560">Oxidoreductase</keyword>
<keyword id="KW-1185">Reference proteome</keyword>
<keyword id="KW-0813">Transport</keyword>
<name>DFA1_THEVB</name>
<protein>
    <recommendedName>
        <fullName>Putative diflavin flavoprotein A 1</fullName>
        <ecNumber>1.-.-.-</ecNumber>
    </recommendedName>
</protein>
<accession>Q8DJY2</accession>